<feature type="signal peptide" evidence="2">
    <location>
        <begin position="1"/>
        <end position="23"/>
    </location>
</feature>
<feature type="chain" id="PRO_0000005235" description="C-C motif chemokine 25">
    <location>
        <begin position="24"/>
        <end position="150"/>
    </location>
</feature>
<feature type="disulfide bond" evidence="1">
    <location>
        <begin position="30"/>
        <end position="58"/>
    </location>
</feature>
<feature type="disulfide bond" evidence="1">
    <location>
        <begin position="31"/>
        <end position="75"/>
    </location>
</feature>
<feature type="splice variant" id="VSP_001064" description="In isoform 2." evidence="6">
    <original>FYLPKRHRKVCGNPKSREVQRAMKLLDARNKVFAKLHHNTQTFQAGPHAVKKLSSGNSKLSSSKFSNPISSSKRNVSLLISANSGL</original>
    <variation>RPSCCKEVEFWKLQVIIIQV</variation>
    <location>
        <begin position="65"/>
        <end position="150"/>
    </location>
</feature>
<feature type="splice variant" id="VSP_043199" description="In isoform 3." evidence="4 5">
    <location>
        <position position="109"/>
    </location>
</feature>
<feature type="sequence variant" id="VAR_044519" description="In dbSNP:rs960173.">
    <original>T</original>
    <variation>A</variation>
    <location>
        <position position="23"/>
    </location>
</feature>
<feature type="sequence variant" id="VAR_044520" description="In dbSNP:rs2032887.">
    <original>H</original>
    <variation>R</variation>
    <location>
        <position position="101"/>
    </location>
</feature>
<feature type="sequence variant" id="VAR_044521" description="In dbSNP:rs1129763." evidence="3">
    <original>T</original>
    <variation>M</variation>
    <location>
        <position position="104"/>
    </location>
</feature>
<comment type="function">
    <text>Potentially involved in T-cell development. Recombinant protein shows chemotactic activity on thymocytes, macrophages, THP-1 cells, and dendritics cells but is inactive on peripheral blood lymphocytes and neutrophils. Binds to CCR9. Isoform 2 is an antagonist of isoform 1. Binds to atypical chemokine receptor ACKR4 and mediates the recruitment of beta-arrestin (ARRB1/2) to ACKR4.</text>
</comment>
<comment type="interaction">
    <interactant intactId="EBI-7783341">
        <id>O15444</id>
    </interactant>
    <interactant intactId="EBI-16640146">
        <id>Q92583</id>
        <label>CCL17</label>
    </interactant>
    <organismsDiffer>false</organismsDiffer>
    <experiments>2</experiments>
</comment>
<comment type="interaction">
    <interactant intactId="EBI-7783341">
        <id>O15444</id>
    </interactant>
    <interactant intactId="EBI-2848366">
        <id>P13501</id>
        <label>CCL5</label>
    </interactant>
    <organismsDiffer>false</organismsDiffer>
    <experiments>2</experiments>
</comment>
<comment type="interaction">
    <interactant intactId="EBI-7783341">
        <id>O15444</id>
    </interactant>
    <interactant intactId="EBI-3913254">
        <id>P48061</id>
        <label>CXCL12</label>
    </interactant>
    <organismsDiffer>false</organismsDiffer>
    <experiments>2</experiments>
</comment>
<comment type="interaction">
    <interactant intactId="EBI-7783341">
        <id>O15444</id>
    </interactant>
    <interactant intactId="EBI-2565740">
        <id>P02776</id>
        <label>PF4</label>
    </interactant>
    <organismsDiffer>false</organismsDiffer>
    <experiments>3</experiments>
</comment>
<comment type="interaction">
    <interactant intactId="EBI-7783341">
        <id>O15444</id>
    </interactant>
    <interactant intactId="EBI-1223944">
        <id>P10720</id>
        <label>PF4V1</label>
    </interactant>
    <organismsDiffer>false</organismsDiffer>
    <experiments>2</experiments>
</comment>
<comment type="subcellular location">
    <subcellularLocation>
        <location>Secreted</location>
    </subcellularLocation>
</comment>
<comment type="alternative products">
    <event type="alternative splicing"/>
    <isoform>
        <id>O15444-1</id>
        <name>1</name>
        <sequence type="displayed"/>
    </isoform>
    <isoform>
        <id>O15444-2</id>
        <name>2</name>
        <name>TECKvar</name>
        <sequence type="described" ref="VSP_001064"/>
    </isoform>
    <isoform>
        <id>O15444-3</id>
        <name>3</name>
        <sequence type="described" ref="VSP_043199"/>
    </isoform>
</comment>
<comment type="tissue specificity">
    <text>Specifically expressed by thymic dendritic cells. High levels in thymus and small intestine.</text>
</comment>
<comment type="miscellaneous">
    <molecule>Isoform 2</molecule>
    <text evidence="7">May be produced at very low levels due to a premature stop codon in the mRNA, leading to nonsense-mediated mRNA decay.</text>
</comment>
<comment type="similarity">
    <text evidence="7">Belongs to the intercrine beta (chemokine CC) family.</text>
</comment>
<comment type="online information" name="Wikipedia">
    <link uri="https://en.wikipedia.org/wiki/CCL25"/>
    <text>CCL25 entry</text>
</comment>
<gene>
    <name type="primary">CCL25</name>
    <name type="synonym">SCYA25</name>
    <name type="synonym">TECK</name>
</gene>
<accession>O15444</accession>
<accession>A1L4J4</accession>
<accession>A6NI52</accession>
<accession>A8K9E7</accession>
<accession>B5MCA5</accession>
<accession>Q96KJ7</accession>
<name>CCL25_HUMAN</name>
<reference key="1">
    <citation type="journal article" date="1997" name="Immunity">
        <title>TECK: a novel CC chemokine specifically expressed by thymic dendritic cells and potentially involved in T cell development.</title>
        <authorList>
            <person name="Vicari A.P."/>
            <person name="Figueroa D.J."/>
            <person name="Hedrick J.A."/>
            <person name="Foster J.S."/>
            <person name="Singh K.P."/>
            <person name="Menon S."/>
            <person name="Copeland N.G."/>
            <person name="Gilbert D.J."/>
            <person name="Jenkins N.A."/>
            <person name="Bacon K.B."/>
            <person name="Zlotnik A."/>
        </authorList>
    </citation>
    <scope>NUCLEOTIDE SEQUENCE [MRNA] (ISOFORM 1)</scope>
    <scope>VARIANT MET-104</scope>
    <source>
        <tissue>Thymus</tissue>
    </source>
</reference>
<reference key="2">
    <citation type="submission" date="2000-07" db="EMBL/GenBank/DDBJ databases">
        <title>Molecular cloning and characterization of a splicing variant of chemokine TECK: a natural antagonist of human TECK.</title>
        <authorList>
            <person name="Hieshima K."/>
            <person name="Nakayama T."/>
            <person name="Fujisawa R."/>
            <person name="Izawa D."/>
            <person name="Yoshie O."/>
        </authorList>
    </citation>
    <scope>NUCLEOTIDE SEQUENCE [MRNA] (ISOFORM 2)</scope>
    <source>
        <tissue>Thymus</tissue>
    </source>
</reference>
<reference key="3">
    <citation type="journal article" date="2004" name="Nat. Genet.">
        <title>Complete sequencing and characterization of 21,243 full-length human cDNAs.</title>
        <authorList>
            <person name="Ota T."/>
            <person name="Suzuki Y."/>
            <person name="Nishikawa T."/>
            <person name="Otsuki T."/>
            <person name="Sugiyama T."/>
            <person name="Irie R."/>
            <person name="Wakamatsu A."/>
            <person name="Hayashi K."/>
            <person name="Sato H."/>
            <person name="Nagai K."/>
            <person name="Kimura K."/>
            <person name="Makita H."/>
            <person name="Sekine M."/>
            <person name="Obayashi M."/>
            <person name="Nishi T."/>
            <person name="Shibahara T."/>
            <person name="Tanaka T."/>
            <person name="Ishii S."/>
            <person name="Yamamoto J."/>
            <person name="Saito K."/>
            <person name="Kawai Y."/>
            <person name="Isono Y."/>
            <person name="Nakamura Y."/>
            <person name="Nagahari K."/>
            <person name="Murakami K."/>
            <person name="Yasuda T."/>
            <person name="Iwayanagi T."/>
            <person name="Wagatsuma M."/>
            <person name="Shiratori A."/>
            <person name="Sudo H."/>
            <person name="Hosoiri T."/>
            <person name="Kaku Y."/>
            <person name="Kodaira H."/>
            <person name="Kondo H."/>
            <person name="Sugawara M."/>
            <person name="Takahashi M."/>
            <person name="Kanda K."/>
            <person name="Yokoi T."/>
            <person name="Furuya T."/>
            <person name="Kikkawa E."/>
            <person name="Omura Y."/>
            <person name="Abe K."/>
            <person name="Kamihara K."/>
            <person name="Katsuta N."/>
            <person name="Sato K."/>
            <person name="Tanikawa M."/>
            <person name="Yamazaki M."/>
            <person name="Ninomiya K."/>
            <person name="Ishibashi T."/>
            <person name="Yamashita H."/>
            <person name="Murakawa K."/>
            <person name="Fujimori K."/>
            <person name="Tanai H."/>
            <person name="Kimata M."/>
            <person name="Watanabe M."/>
            <person name="Hiraoka S."/>
            <person name="Chiba Y."/>
            <person name="Ishida S."/>
            <person name="Ono Y."/>
            <person name="Takiguchi S."/>
            <person name="Watanabe S."/>
            <person name="Yosida M."/>
            <person name="Hotuta T."/>
            <person name="Kusano J."/>
            <person name="Kanehori K."/>
            <person name="Takahashi-Fujii A."/>
            <person name="Hara H."/>
            <person name="Tanase T.-O."/>
            <person name="Nomura Y."/>
            <person name="Togiya S."/>
            <person name="Komai F."/>
            <person name="Hara R."/>
            <person name="Takeuchi K."/>
            <person name="Arita M."/>
            <person name="Imose N."/>
            <person name="Musashino K."/>
            <person name="Yuuki H."/>
            <person name="Oshima A."/>
            <person name="Sasaki N."/>
            <person name="Aotsuka S."/>
            <person name="Yoshikawa Y."/>
            <person name="Matsunawa H."/>
            <person name="Ichihara T."/>
            <person name="Shiohata N."/>
            <person name="Sano S."/>
            <person name="Moriya S."/>
            <person name="Momiyama H."/>
            <person name="Satoh N."/>
            <person name="Takami S."/>
            <person name="Terashima Y."/>
            <person name="Suzuki O."/>
            <person name="Nakagawa S."/>
            <person name="Senoh A."/>
            <person name="Mizoguchi H."/>
            <person name="Goto Y."/>
            <person name="Shimizu F."/>
            <person name="Wakebe H."/>
            <person name="Hishigaki H."/>
            <person name="Watanabe T."/>
            <person name="Sugiyama A."/>
            <person name="Takemoto M."/>
            <person name="Kawakami B."/>
            <person name="Yamazaki M."/>
            <person name="Watanabe K."/>
            <person name="Kumagai A."/>
            <person name="Itakura S."/>
            <person name="Fukuzumi Y."/>
            <person name="Fujimori Y."/>
            <person name="Komiyama M."/>
            <person name="Tashiro H."/>
            <person name="Tanigami A."/>
            <person name="Fujiwara T."/>
            <person name="Ono T."/>
            <person name="Yamada K."/>
            <person name="Fujii Y."/>
            <person name="Ozaki K."/>
            <person name="Hirao M."/>
            <person name="Ohmori Y."/>
            <person name="Kawabata A."/>
            <person name="Hikiji T."/>
            <person name="Kobatake N."/>
            <person name="Inagaki H."/>
            <person name="Ikema Y."/>
            <person name="Okamoto S."/>
            <person name="Okitani R."/>
            <person name="Kawakami T."/>
            <person name="Noguchi S."/>
            <person name="Itoh T."/>
            <person name="Shigeta K."/>
            <person name="Senba T."/>
            <person name="Matsumura K."/>
            <person name="Nakajima Y."/>
            <person name="Mizuno T."/>
            <person name="Morinaga M."/>
            <person name="Sasaki M."/>
            <person name="Togashi T."/>
            <person name="Oyama M."/>
            <person name="Hata H."/>
            <person name="Watanabe M."/>
            <person name="Komatsu T."/>
            <person name="Mizushima-Sugano J."/>
            <person name="Satoh T."/>
            <person name="Shirai Y."/>
            <person name="Takahashi Y."/>
            <person name="Nakagawa K."/>
            <person name="Okumura K."/>
            <person name="Nagase T."/>
            <person name="Nomura N."/>
            <person name="Kikuchi H."/>
            <person name="Masuho Y."/>
            <person name="Yamashita R."/>
            <person name="Nakai K."/>
            <person name="Yada T."/>
            <person name="Nakamura Y."/>
            <person name="Ohara O."/>
            <person name="Isogai T."/>
            <person name="Sugano S."/>
        </authorList>
    </citation>
    <scope>NUCLEOTIDE SEQUENCE [LARGE SCALE MRNA] (ISOFORM 3)</scope>
    <source>
        <tissue>Thymus</tissue>
    </source>
</reference>
<reference key="4">
    <citation type="journal article" date="2004" name="Nature">
        <title>The DNA sequence and biology of human chromosome 19.</title>
        <authorList>
            <person name="Grimwood J."/>
            <person name="Gordon L.A."/>
            <person name="Olsen A.S."/>
            <person name="Terry A."/>
            <person name="Schmutz J."/>
            <person name="Lamerdin J.E."/>
            <person name="Hellsten U."/>
            <person name="Goodstein D."/>
            <person name="Couronne O."/>
            <person name="Tran-Gyamfi M."/>
            <person name="Aerts A."/>
            <person name="Altherr M."/>
            <person name="Ashworth L."/>
            <person name="Bajorek E."/>
            <person name="Black S."/>
            <person name="Branscomb E."/>
            <person name="Caenepeel S."/>
            <person name="Carrano A.V."/>
            <person name="Caoile C."/>
            <person name="Chan Y.M."/>
            <person name="Christensen M."/>
            <person name="Cleland C.A."/>
            <person name="Copeland A."/>
            <person name="Dalin E."/>
            <person name="Dehal P."/>
            <person name="Denys M."/>
            <person name="Detter J.C."/>
            <person name="Escobar J."/>
            <person name="Flowers D."/>
            <person name="Fotopulos D."/>
            <person name="Garcia C."/>
            <person name="Georgescu A.M."/>
            <person name="Glavina T."/>
            <person name="Gomez M."/>
            <person name="Gonzales E."/>
            <person name="Groza M."/>
            <person name="Hammon N."/>
            <person name="Hawkins T."/>
            <person name="Haydu L."/>
            <person name="Ho I."/>
            <person name="Huang W."/>
            <person name="Israni S."/>
            <person name="Jett J."/>
            <person name="Kadner K."/>
            <person name="Kimball H."/>
            <person name="Kobayashi A."/>
            <person name="Larionov V."/>
            <person name="Leem S.-H."/>
            <person name="Lopez F."/>
            <person name="Lou Y."/>
            <person name="Lowry S."/>
            <person name="Malfatti S."/>
            <person name="Martinez D."/>
            <person name="McCready P.M."/>
            <person name="Medina C."/>
            <person name="Morgan J."/>
            <person name="Nelson K."/>
            <person name="Nolan M."/>
            <person name="Ovcharenko I."/>
            <person name="Pitluck S."/>
            <person name="Pollard M."/>
            <person name="Popkie A.P."/>
            <person name="Predki P."/>
            <person name="Quan G."/>
            <person name="Ramirez L."/>
            <person name="Rash S."/>
            <person name="Retterer J."/>
            <person name="Rodriguez A."/>
            <person name="Rogers S."/>
            <person name="Salamov A."/>
            <person name="Salazar A."/>
            <person name="She X."/>
            <person name="Smith D."/>
            <person name="Slezak T."/>
            <person name="Solovyev V."/>
            <person name="Thayer N."/>
            <person name="Tice H."/>
            <person name="Tsai M."/>
            <person name="Ustaszewska A."/>
            <person name="Vo N."/>
            <person name="Wagner M."/>
            <person name="Wheeler J."/>
            <person name="Wu K."/>
            <person name="Xie G."/>
            <person name="Yang J."/>
            <person name="Dubchak I."/>
            <person name="Furey T.S."/>
            <person name="DeJong P."/>
            <person name="Dickson M."/>
            <person name="Gordon D."/>
            <person name="Eichler E.E."/>
            <person name="Pennacchio L.A."/>
            <person name="Richardson P."/>
            <person name="Stubbs L."/>
            <person name="Rokhsar D.S."/>
            <person name="Myers R.M."/>
            <person name="Rubin E.M."/>
            <person name="Lucas S.M."/>
        </authorList>
    </citation>
    <scope>NUCLEOTIDE SEQUENCE [LARGE SCALE GENOMIC DNA]</scope>
</reference>
<reference key="5">
    <citation type="submission" date="2005-09" db="EMBL/GenBank/DDBJ databases">
        <authorList>
            <person name="Mural R.J."/>
            <person name="Istrail S."/>
            <person name="Sutton G.G."/>
            <person name="Florea L."/>
            <person name="Halpern A.L."/>
            <person name="Mobarry C.M."/>
            <person name="Lippert R."/>
            <person name="Walenz B."/>
            <person name="Shatkay H."/>
            <person name="Dew I."/>
            <person name="Miller J.R."/>
            <person name="Flanigan M.J."/>
            <person name="Edwards N.J."/>
            <person name="Bolanos R."/>
            <person name="Fasulo D."/>
            <person name="Halldorsson B.V."/>
            <person name="Hannenhalli S."/>
            <person name="Turner R."/>
            <person name="Yooseph S."/>
            <person name="Lu F."/>
            <person name="Nusskern D.R."/>
            <person name="Shue B.C."/>
            <person name="Zheng X.H."/>
            <person name="Zhong F."/>
            <person name="Delcher A.L."/>
            <person name="Huson D.H."/>
            <person name="Kravitz S.A."/>
            <person name="Mouchard L."/>
            <person name="Reinert K."/>
            <person name="Remington K.A."/>
            <person name="Clark A.G."/>
            <person name="Waterman M.S."/>
            <person name="Eichler E.E."/>
            <person name="Adams M.D."/>
            <person name="Hunkapiller M.W."/>
            <person name="Myers E.W."/>
            <person name="Venter J.C."/>
        </authorList>
    </citation>
    <scope>NUCLEOTIDE SEQUENCE [LARGE SCALE GENOMIC DNA]</scope>
</reference>
<reference key="6">
    <citation type="journal article" date="2004" name="Genome Res.">
        <title>The status, quality, and expansion of the NIH full-length cDNA project: the Mammalian Gene Collection (MGC).</title>
        <authorList>
            <consortium name="The MGC Project Team"/>
        </authorList>
    </citation>
    <scope>NUCLEOTIDE SEQUENCE [LARGE SCALE MRNA] (ISOFORMS 1 AND 3)</scope>
    <source>
        <tissue>Lung</tissue>
    </source>
</reference>
<reference key="7">
    <citation type="journal article" date="1999" name="J. Immunol.">
        <title>Identification of the orphan chemokine receptor GPR-9-6 as CCR9, the receptor for the chemokine TECK.</title>
        <authorList>
            <person name="Zaballos A."/>
            <person name="Gutierrez J."/>
            <person name="Varona R."/>
            <person name="Ardavin C."/>
            <person name="Marquez G."/>
        </authorList>
    </citation>
    <scope>RECEPTOR INTERACTION</scope>
</reference>
<reference key="8">
    <citation type="journal article" date="2013" name="J. Biol. Chem.">
        <title>Beta-arrestin recruitment and G protein signaling by the atypical human chemokine decoy receptor CCX-CKR.</title>
        <authorList>
            <person name="Watts A.O."/>
            <person name="Verkaar F."/>
            <person name="van der Lee M.M."/>
            <person name="Timmerman C.A."/>
            <person name="Kuijer M."/>
            <person name="van Offenbeek J."/>
            <person name="van Lith L.H."/>
            <person name="Smit M.J."/>
            <person name="Leurs R."/>
            <person name="Zaman G.J."/>
            <person name="Vischer H.F."/>
        </authorList>
    </citation>
    <scope>RECEPTOR INTERACTION</scope>
</reference>
<keyword id="KW-0025">Alternative splicing</keyword>
<keyword id="KW-0145">Chemotaxis</keyword>
<keyword id="KW-0202">Cytokine</keyword>
<keyword id="KW-1015">Disulfide bond</keyword>
<keyword id="KW-0395">Inflammatory response</keyword>
<keyword id="KW-1267">Proteomics identification</keyword>
<keyword id="KW-1185">Reference proteome</keyword>
<keyword id="KW-0964">Secreted</keyword>
<keyword id="KW-0732">Signal</keyword>
<organism>
    <name type="scientific">Homo sapiens</name>
    <name type="common">Human</name>
    <dbReference type="NCBI Taxonomy" id="9606"/>
    <lineage>
        <taxon>Eukaryota</taxon>
        <taxon>Metazoa</taxon>
        <taxon>Chordata</taxon>
        <taxon>Craniata</taxon>
        <taxon>Vertebrata</taxon>
        <taxon>Euteleostomi</taxon>
        <taxon>Mammalia</taxon>
        <taxon>Eutheria</taxon>
        <taxon>Euarchontoglires</taxon>
        <taxon>Primates</taxon>
        <taxon>Haplorrhini</taxon>
        <taxon>Catarrhini</taxon>
        <taxon>Hominidae</taxon>
        <taxon>Homo</taxon>
    </lineage>
</organism>
<sequence length="150" mass="16609">MNLWLLACLVAGFLGAWAPAVHTQGVFEDCCLAYHYPIGWAVLRRAWTYRIQEVSGSCNLPAAIFYLPKRHRKVCGNPKSREVQRAMKLLDARNKVFAKLHHNTQTFQAGPHAVKKLSSGNSKLSSSKFSNPISSSKRNVSLLISANSGL</sequence>
<protein>
    <recommendedName>
        <fullName>C-C motif chemokine 25</fullName>
    </recommendedName>
    <alternativeName>
        <fullName>Chemokine TECK</fullName>
    </alternativeName>
    <alternativeName>
        <fullName>Small-inducible cytokine A25</fullName>
    </alternativeName>
    <alternativeName>
        <fullName>Thymus-expressed chemokine</fullName>
    </alternativeName>
</protein>
<evidence type="ECO:0000250" key="1"/>
<evidence type="ECO:0000255" key="2"/>
<evidence type="ECO:0000269" key="3">
    <source>
    </source>
</evidence>
<evidence type="ECO:0000303" key="4">
    <source>
    </source>
</evidence>
<evidence type="ECO:0000303" key="5">
    <source>
    </source>
</evidence>
<evidence type="ECO:0000303" key="6">
    <source ref="2"/>
</evidence>
<evidence type="ECO:0000305" key="7"/>
<proteinExistence type="evidence at protein level"/>
<dbReference type="EMBL" id="U86358">
    <property type="protein sequence ID" value="AAB69981.1"/>
    <property type="molecule type" value="mRNA"/>
</dbReference>
<dbReference type="EMBL" id="AB046579">
    <property type="protein sequence ID" value="BAB62257.1"/>
    <property type="molecule type" value="mRNA"/>
</dbReference>
<dbReference type="EMBL" id="AK292662">
    <property type="protein sequence ID" value="BAF85351.1"/>
    <property type="molecule type" value="mRNA"/>
</dbReference>
<dbReference type="EMBL" id="AC008946">
    <property type="status" value="NOT_ANNOTATED_CDS"/>
    <property type="molecule type" value="Genomic_DNA"/>
</dbReference>
<dbReference type="EMBL" id="CH471139">
    <property type="protein sequence ID" value="EAW68952.1"/>
    <property type="molecule type" value="Genomic_DNA"/>
</dbReference>
<dbReference type="EMBL" id="BC130561">
    <property type="protein sequence ID" value="AAI30562.1"/>
    <property type="molecule type" value="mRNA"/>
</dbReference>
<dbReference type="EMBL" id="BC144463">
    <property type="protein sequence ID" value="AAI44464.1"/>
    <property type="molecule type" value="mRNA"/>
</dbReference>
<dbReference type="CCDS" id="CCDS12194.1">
    <molecule id="O15444-1"/>
</dbReference>
<dbReference type="CCDS" id="CCDS56080.1">
    <molecule id="O15444-3"/>
</dbReference>
<dbReference type="RefSeq" id="NP_001188288.1">
    <molecule id="O15444-3"/>
    <property type="nucleotide sequence ID" value="NM_001201359.2"/>
</dbReference>
<dbReference type="RefSeq" id="NP_001381563.1">
    <molecule id="O15444-1"/>
    <property type="nucleotide sequence ID" value="NM_001394634.1"/>
</dbReference>
<dbReference type="RefSeq" id="NP_001381564.1">
    <molecule id="O15444-1"/>
    <property type="nucleotide sequence ID" value="NM_001394635.1"/>
</dbReference>
<dbReference type="RefSeq" id="NP_001381565.1">
    <molecule id="O15444-1"/>
    <property type="nucleotide sequence ID" value="NM_001394636.1"/>
</dbReference>
<dbReference type="RefSeq" id="NP_001381566.1">
    <molecule id="O15444-1"/>
    <property type="nucleotide sequence ID" value="NM_001394637.1"/>
</dbReference>
<dbReference type="RefSeq" id="NP_001381567.1">
    <molecule id="O15444-3"/>
    <property type="nucleotide sequence ID" value="NM_001394638.1"/>
</dbReference>
<dbReference type="RefSeq" id="NP_005615.2">
    <molecule id="O15444-1"/>
    <property type="nucleotide sequence ID" value="NM_005624.3"/>
</dbReference>
<dbReference type="RefSeq" id="XP_011526479.1">
    <property type="nucleotide sequence ID" value="XM_011528177.2"/>
</dbReference>
<dbReference type="RefSeq" id="XP_016882609.1">
    <property type="nucleotide sequence ID" value="XM_017027120.1"/>
</dbReference>
<dbReference type="RefSeq" id="XP_016882610.1">
    <property type="nucleotide sequence ID" value="XM_017027121.1"/>
</dbReference>
<dbReference type="RefSeq" id="XP_016882611.1">
    <property type="nucleotide sequence ID" value="XM_017027122.1"/>
</dbReference>
<dbReference type="RefSeq" id="XP_047295160.1">
    <molecule id="O15444-1"/>
    <property type="nucleotide sequence ID" value="XM_047439204.1"/>
</dbReference>
<dbReference type="SMR" id="O15444"/>
<dbReference type="BioGRID" id="112273">
    <property type="interactions" value="11"/>
</dbReference>
<dbReference type="DIP" id="DIP-5883N"/>
<dbReference type="FunCoup" id="O15444">
    <property type="interactions" value="802"/>
</dbReference>
<dbReference type="IntAct" id="O15444">
    <property type="interactions" value="12"/>
</dbReference>
<dbReference type="MINT" id="O15444"/>
<dbReference type="STRING" id="9606.ENSP00000375086"/>
<dbReference type="iPTMnet" id="O15444"/>
<dbReference type="PhosphoSitePlus" id="O15444"/>
<dbReference type="BioMuta" id="CCL25"/>
<dbReference type="MassIVE" id="O15444"/>
<dbReference type="PaxDb" id="9606-ENSP00000375086"/>
<dbReference type="PeptideAtlas" id="O15444"/>
<dbReference type="ProteomicsDB" id="48672">
    <molecule id="O15444-1"/>
</dbReference>
<dbReference type="ProteomicsDB" id="48673">
    <molecule id="O15444-2"/>
</dbReference>
<dbReference type="ProteomicsDB" id="48674">
    <molecule id="O15444-3"/>
</dbReference>
<dbReference type="Antibodypedia" id="24738">
    <property type="antibodies" value="398 antibodies from 30 providers"/>
</dbReference>
<dbReference type="DNASU" id="6370"/>
<dbReference type="Ensembl" id="ENST00000253451.9">
    <molecule id="O15444-3"/>
    <property type="protein sequence ID" value="ENSP00000253451.4"/>
    <property type="gene ID" value="ENSG00000131142.14"/>
</dbReference>
<dbReference type="Ensembl" id="ENST00000315626.6">
    <molecule id="O15444-1"/>
    <property type="protein sequence ID" value="ENSP00000324756.6"/>
    <property type="gene ID" value="ENSG00000131142.14"/>
</dbReference>
<dbReference type="Ensembl" id="ENST00000390669.7">
    <molecule id="O15444-1"/>
    <property type="protein sequence ID" value="ENSP00000375086.3"/>
    <property type="gene ID" value="ENSG00000131142.14"/>
</dbReference>
<dbReference type="Ensembl" id="ENST00000680450.1">
    <molecule id="O15444-3"/>
    <property type="protein sequence ID" value="ENSP00000506202.1"/>
    <property type="gene ID" value="ENSG00000131142.14"/>
</dbReference>
<dbReference type="Ensembl" id="ENST00000680506.1">
    <molecule id="O15444-1"/>
    <property type="protein sequence ID" value="ENSP00000505422.1"/>
    <property type="gene ID" value="ENSG00000131142.14"/>
</dbReference>
<dbReference type="Ensembl" id="ENST00000680646.1">
    <molecule id="O15444-1"/>
    <property type="protein sequence ID" value="ENSP00000504875.1"/>
    <property type="gene ID" value="ENSG00000131142.14"/>
</dbReference>
<dbReference type="Ensembl" id="ENST00000681526.1">
    <molecule id="O15444-3"/>
    <property type="protein sequence ID" value="ENSP00000505387.1"/>
    <property type="gene ID" value="ENSG00000131142.14"/>
</dbReference>
<dbReference type="GeneID" id="6370"/>
<dbReference type="KEGG" id="hsa:6370"/>
<dbReference type="MANE-Select" id="ENST00000315626.6">
    <property type="protein sequence ID" value="ENSP00000324756.6"/>
    <property type="RefSeq nucleotide sequence ID" value="NM_005624.4"/>
    <property type="RefSeq protein sequence ID" value="NP_005615.2"/>
</dbReference>
<dbReference type="UCSC" id="uc002mjc.5">
    <molecule id="O15444-1"/>
    <property type="organism name" value="human"/>
</dbReference>
<dbReference type="AGR" id="HGNC:10624"/>
<dbReference type="CTD" id="6370"/>
<dbReference type="DisGeNET" id="6370"/>
<dbReference type="GeneCards" id="CCL25"/>
<dbReference type="HGNC" id="HGNC:10624">
    <property type="gene designation" value="CCL25"/>
</dbReference>
<dbReference type="HPA" id="ENSG00000131142">
    <property type="expression patterns" value="Group enriched (intestine, lymphoid tissue)"/>
</dbReference>
<dbReference type="MIM" id="602565">
    <property type="type" value="gene"/>
</dbReference>
<dbReference type="neXtProt" id="NX_O15444"/>
<dbReference type="OpenTargets" id="ENSG00000131142"/>
<dbReference type="PharmGKB" id="PA35556"/>
<dbReference type="VEuPathDB" id="HostDB:ENSG00000131142"/>
<dbReference type="eggNOG" id="ENOG502S8D1">
    <property type="taxonomic scope" value="Eukaryota"/>
</dbReference>
<dbReference type="GeneTree" id="ENSGT01100000263482"/>
<dbReference type="HOGENOM" id="CLU_113773_0_0_1"/>
<dbReference type="InParanoid" id="O15444"/>
<dbReference type="OMA" id="RAWAYRI"/>
<dbReference type="OrthoDB" id="9930747at2759"/>
<dbReference type="PAN-GO" id="O15444">
    <property type="GO annotations" value="14 GO annotations based on evolutionary models"/>
</dbReference>
<dbReference type="PhylomeDB" id="O15444"/>
<dbReference type="TreeFam" id="TF353160"/>
<dbReference type="PathwayCommons" id="O15444"/>
<dbReference type="Reactome" id="R-HSA-380108">
    <property type="pathway name" value="Chemokine receptors bind chemokines"/>
</dbReference>
<dbReference type="Reactome" id="R-HSA-418594">
    <property type="pathway name" value="G alpha (i) signalling events"/>
</dbReference>
<dbReference type="SignaLink" id="O15444"/>
<dbReference type="SIGNOR" id="O15444"/>
<dbReference type="BioGRID-ORCS" id="6370">
    <property type="hits" value="11 hits in 1141 CRISPR screens"/>
</dbReference>
<dbReference type="GenomeRNAi" id="6370"/>
<dbReference type="Pharos" id="O15444">
    <property type="development level" value="Tbio"/>
</dbReference>
<dbReference type="PRO" id="PR:O15444"/>
<dbReference type="Proteomes" id="UP000005640">
    <property type="component" value="Chromosome 19"/>
</dbReference>
<dbReference type="RNAct" id="O15444">
    <property type="molecule type" value="protein"/>
</dbReference>
<dbReference type="Bgee" id="ENSG00000131142">
    <property type="expression patterns" value="Expressed in duodenum and 76 other cell types or tissues"/>
</dbReference>
<dbReference type="ExpressionAtlas" id="O15444">
    <property type="expression patterns" value="baseline and differential"/>
</dbReference>
<dbReference type="GO" id="GO:0005576">
    <property type="term" value="C:extracellular region"/>
    <property type="evidence" value="ECO:0000304"/>
    <property type="project" value="Reactome"/>
</dbReference>
<dbReference type="GO" id="GO:0005615">
    <property type="term" value="C:extracellular space"/>
    <property type="evidence" value="ECO:0000318"/>
    <property type="project" value="GO_Central"/>
</dbReference>
<dbReference type="GO" id="GO:0048020">
    <property type="term" value="F:CCR chemokine receptor binding"/>
    <property type="evidence" value="ECO:0000318"/>
    <property type="project" value="GO_Central"/>
</dbReference>
<dbReference type="GO" id="GO:0031735">
    <property type="term" value="F:CCR10 chemokine receptor binding"/>
    <property type="evidence" value="ECO:0000314"/>
    <property type="project" value="BHF-UCL"/>
</dbReference>
<dbReference type="GO" id="GO:0008009">
    <property type="term" value="F:chemokine activity"/>
    <property type="evidence" value="ECO:0000314"/>
    <property type="project" value="UniProtKB"/>
</dbReference>
<dbReference type="GO" id="GO:0042379">
    <property type="term" value="F:chemokine receptor binding"/>
    <property type="evidence" value="ECO:0000314"/>
    <property type="project" value="UniProtKB"/>
</dbReference>
<dbReference type="GO" id="GO:0005179">
    <property type="term" value="F:hormone activity"/>
    <property type="evidence" value="ECO:0000304"/>
    <property type="project" value="ProtInc"/>
</dbReference>
<dbReference type="GO" id="GO:0061844">
    <property type="term" value="P:antimicrobial humoral immune response mediated by antimicrobial peptide"/>
    <property type="evidence" value="ECO:0000318"/>
    <property type="project" value="GO_Central"/>
</dbReference>
<dbReference type="GO" id="GO:0060326">
    <property type="term" value="P:cell chemotaxis"/>
    <property type="evidence" value="ECO:0000314"/>
    <property type="project" value="UniProtKB"/>
</dbReference>
<dbReference type="GO" id="GO:0007166">
    <property type="term" value="P:cell surface receptor signaling pathway"/>
    <property type="evidence" value="ECO:0000304"/>
    <property type="project" value="ProtInc"/>
</dbReference>
<dbReference type="GO" id="GO:0070098">
    <property type="term" value="P:chemokine-mediated signaling pathway"/>
    <property type="evidence" value="ECO:0000318"/>
    <property type="project" value="GO_Central"/>
</dbReference>
<dbReference type="GO" id="GO:0006935">
    <property type="term" value="P:chemotaxis"/>
    <property type="evidence" value="ECO:0000304"/>
    <property type="project" value="ProtInc"/>
</dbReference>
<dbReference type="GO" id="GO:0048245">
    <property type="term" value="P:eosinophil chemotaxis"/>
    <property type="evidence" value="ECO:0000318"/>
    <property type="project" value="GO_Central"/>
</dbReference>
<dbReference type="GO" id="GO:0007186">
    <property type="term" value="P:G protein-coupled receptor signaling pathway"/>
    <property type="evidence" value="ECO:0000314"/>
    <property type="project" value="UniProtKB"/>
</dbReference>
<dbReference type="GO" id="GO:0006955">
    <property type="term" value="P:immune response"/>
    <property type="evidence" value="ECO:0000304"/>
    <property type="project" value="ProtInc"/>
</dbReference>
<dbReference type="GO" id="GO:0006954">
    <property type="term" value="P:inflammatory response"/>
    <property type="evidence" value="ECO:0000318"/>
    <property type="project" value="GO_Central"/>
</dbReference>
<dbReference type="GO" id="GO:1903237">
    <property type="term" value="P:negative regulation of leukocyte tethering or rolling"/>
    <property type="evidence" value="ECO:0000314"/>
    <property type="project" value="UniProtKB"/>
</dbReference>
<dbReference type="GO" id="GO:0030335">
    <property type="term" value="P:positive regulation of cell migration"/>
    <property type="evidence" value="ECO:0000318"/>
    <property type="project" value="GO_Central"/>
</dbReference>
<dbReference type="GO" id="GO:0001954">
    <property type="term" value="P:positive regulation of cell-matrix adhesion"/>
    <property type="evidence" value="ECO:0000314"/>
    <property type="project" value="UniProtKB"/>
</dbReference>
<dbReference type="CDD" id="cd01119">
    <property type="entry name" value="Chemokine_CC_DCCL"/>
    <property type="match status" value="1"/>
</dbReference>
<dbReference type="FunFam" id="2.40.50.40:FF:000026">
    <property type="entry name" value="C-C motif chemokine 25"/>
    <property type="match status" value="1"/>
</dbReference>
<dbReference type="Gene3D" id="2.40.50.40">
    <property type="match status" value="1"/>
</dbReference>
<dbReference type="InterPro" id="IPR039809">
    <property type="entry name" value="Chemokine_b/g/d"/>
</dbReference>
<dbReference type="InterPro" id="IPR034133">
    <property type="entry name" value="Chemokine_CC_DCCL"/>
</dbReference>
<dbReference type="InterPro" id="IPR001811">
    <property type="entry name" value="Chemokine_IL8-like_dom"/>
</dbReference>
<dbReference type="InterPro" id="IPR036048">
    <property type="entry name" value="Interleukin_8-like_sf"/>
</dbReference>
<dbReference type="PANTHER" id="PTHR12015:SF70">
    <property type="entry name" value="C-C MOTIF CHEMOKINE 25"/>
    <property type="match status" value="1"/>
</dbReference>
<dbReference type="PANTHER" id="PTHR12015">
    <property type="entry name" value="SMALL INDUCIBLE CYTOKINE A"/>
    <property type="match status" value="1"/>
</dbReference>
<dbReference type="Pfam" id="PF00048">
    <property type="entry name" value="IL8"/>
    <property type="match status" value="1"/>
</dbReference>
<dbReference type="SMART" id="SM00199">
    <property type="entry name" value="SCY"/>
    <property type="match status" value="1"/>
</dbReference>
<dbReference type="SUPFAM" id="SSF54117">
    <property type="entry name" value="Interleukin 8-like chemokines"/>
    <property type="match status" value="1"/>
</dbReference>